<sequence>MPQEEKTLRMDTPPPDEILGKQNENLQNQDEELGFKEMDGLREALANLRGLSEEEKGEKAMLRSRIQEQSQLICILKRRSDEALERCQILELLNSELEEKRLQEMEKLKAQSEHIQKLENHFMILASNHEQMIRFKDAHKSENVKLKEENARLRQENNSLFSQALKDQEAKVLELTTLNKALVEELEVLKQRCAHEASQAQAREEELLGLQNQQACDHAKETEELRSQLQSIKQQHQQATEQMGKEQEANLNLNQELQARLQTVLREKEELLQLSMERGKVLQNKQAEIRQLEEKLETAAMAKKHALERFEQEAVAVDSNLRVRELQRRVDGIQKAYDELRLQSEAFKKHSLDLLSKERELNAKLRHLFP</sequence>
<reference key="1">
    <citation type="journal article" date="2009" name="PLoS Biol.">
        <title>Lineage-specific biology revealed by a finished genome assembly of the mouse.</title>
        <authorList>
            <person name="Church D.M."/>
            <person name="Goodstadt L."/>
            <person name="Hillier L.W."/>
            <person name="Zody M.C."/>
            <person name="Goldstein S."/>
            <person name="She X."/>
            <person name="Bult C.J."/>
            <person name="Agarwala R."/>
            <person name="Cherry J.L."/>
            <person name="DiCuccio M."/>
            <person name="Hlavina W."/>
            <person name="Kapustin Y."/>
            <person name="Meric P."/>
            <person name="Maglott D."/>
            <person name="Birtle Z."/>
            <person name="Marques A.C."/>
            <person name="Graves T."/>
            <person name="Zhou S."/>
            <person name="Teague B."/>
            <person name="Potamousis K."/>
            <person name="Churas C."/>
            <person name="Place M."/>
            <person name="Herschleb J."/>
            <person name="Runnheim R."/>
            <person name="Forrest D."/>
            <person name="Amos-Landgraf J."/>
            <person name="Schwartz D.C."/>
            <person name="Cheng Z."/>
            <person name="Lindblad-Toh K."/>
            <person name="Eichler E.E."/>
            <person name="Ponting C.P."/>
        </authorList>
    </citation>
    <scope>NUCLEOTIDE SEQUENCE [LARGE SCALE GENOMIC DNA]</scope>
    <source>
        <strain>C57BL/6J</strain>
    </source>
</reference>
<reference evidence="7 8" key="2">
    <citation type="journal article" date="2005" name="Science">
        <title>The transcriptional landscape of the mammalian genome.</title>
        <authorList>
            <person name="Carninci P."/>
            <person name="Kasukawa T."/>
            <person name="Katayama S."/>
            <person name="Gough J."/>
            <person name="Frith M.C."/>
            <person name="Maeda N."/>
            <person name="Oyama R."/>
            <person name="Ravasi T."/>
            <person name="Lenhard B."/>
            <person name="Wells C."/>
            <person name="Kodzius R."/>
            <person name="Shimokawa K."/>
            <person name="Bajic V.B."/>
            <person name="Brenner S.E."/>
            <person name="Batalov S."/>
            <person name="Forrest A.R."/>
            <person name="Zavolan M."/>
            <person name="Davis M.J."/>
            <person name="Wilming L.G."/>
            <person name="Aidinis V."/>
            <person name="Allen J.E."/>
            <person name="Ambesi-Impiombato A."/>
            <person name="Apweiler R."/>
            <person name="Aturaliya R.N."/>
            <person name="Bailey T.L."/>
            <person name="Bansal M."/>
            <person name="Baxter L."/>
            <person name="Beisel K.W."/>
            <person name="Bersano T."/>
            <person name="Bono H."/>
            <person name="Chalk A.M."/>
            <person name="Chiu K.P."/>
            <person name="Choudhary V."/>
            <person name="Christoffels A."/>
            <person name="Clutterbuck D.R."/>
            <person name="Crowe M.L."/>
            <person name="Dalla E."/>
            <person name="Dalrymple B.P."/>
            <person name="de Bono B."/>
            <person name="Della Gatta G."/>
            <person name="di Bernardo D."/>
            <person name="Down T."/>
            <person name="Engstrom P."/>
            <person name="Fagiolini M."/>
            <person name="Faulkner G."/>
            <person name="Fletcher C.F."/>
            <person name="Fukushima T."/>
            <person name="Furuno M."/>
            <person name="Futaki S."/>
            <person name="Gariboldi M."/>
            <person name="Georgii-Hemming P."/>
            <person name="Gingeras T.R."/>
            <person name="Gojobori T."/>
            <person name="Green R.E."/>
            <person name="Gustincich S."/>
            <person name="Harbers M."/>
            <person name="Hayashi Y."/>
            <person name="Hensch T.K."/>
            <person name="Hirokawa N."/>
            <person name="Hill D."/>
            <person name="Huminiecki L."/>
            <person name="Iacono M."/>
            <person name="Ikeo K."/>
            <person name="Iwama A."/>
            <person name="Ishikawa T."/>
            <person name="Jakt M."/>
            <person name="Kanapin A."/>
            <person name="Katoh M."/>
            <person name="Kawasawa Y."/>
            <person name="Kelso J."/>
            <person name="Kitamura H."/>
            <person name="Kitano H."/>
            <person name="Kollias G."/>
            <person name="Krishnan S.P."/>
            <person name="Kruger A."/>
            <person name="Kummerfeld S.K."/>
            <person name="Kurochkin I.V."/>
            <person name="Lareau L.F."/>
            <person name="Lazarevic D."/>
            <person name="Lipovich L."/>
            <person name="Liu J."/>
            <person name="Liuni S."/>
            <person name="McWilliam S."/>
            <person name="Madan Babu M."/>
            <person name="Madera M."/>
            <person name="Marchionni L."/>
            <person name="Matsuda H."/>
            <person name="Matsuzawa S."/>
            <person name="Miki H."/>
            <person name="Mignone F."/>
            <person name="Miyake S."/>
            <person name="Morris K."/>
            <person name="Mottagui-Tabar S."/>
            <person name="Mulder N."/>
            <person name="Nakano N."/>
            <person name="Nakauchi H."/>
            <person name="Ng P."/>
            <person name="Nilsson R."/>
            <person name="Nishiguchi S."/>
            <person name="Nishikawa S."/>
            <person name="Nori F."/>
            <person name="Ohara O."/>
            <person name="Okazaki Y."/>
            <person name="Orlando V."/>
            <person name="Pang K.C."/>
            <person name="Pavan W.J."/>
            <person name="Pavesi G."/>
            <person name="Pesole G."/>
            <person name="Petrovsky N."/>
            <person name="Piazza S."/>
            <person name="Reed J."/>
            <person name="Reid J.F."/>
            <person name="Ring B.Z."/>
            <person name="Ringwald M."/>
            <person name="Rost B."/>
            <person name="Ruan Y."/>
            <person name="Salzberg S.L."/>
            <person name="Sandelin A."/>
            <person name="Schneider C."/>
            <person name="Schoenbach C."/>
            <person name="Sekiguchi K."/>
            <person name="Semple C.A."/>
            <person name="Seno S."/>
            <person name="Sessa L."/>
            <person name="Sheng Y."/>
            <person name="Shibata Y."/>
            <person name="Shimada H."/>
            <person name="Shimada K."/>
            <person name="Silva D."/>
            <person name="Sinclair B."/>
            <person name="Sperling S."/>
            <person name="Stupka E."/>
            <person name="Sugiura K."/>
            <person name="Sultana R."/>
            <person name="Takenaka Y."/>
            <person name="Taki K."/>
            <person name="Tammoja K."/>
            <person name="Tan S.L."/>
            <person name="Tang S."/>
            <person name="Taylor M.S."/>
            <person name="Tegner J."/>
            <person name="Teichmann S.A."/>
            <person name="Ueda H.R."/>
            <person name="van Nimwegen E."/>
            <person name="Verardo R."/>
            <person name="Wei C.L."/>
            <person name="Yagi K."/>
            <person name="Yamanishi H."/>
            <person name="Zabarovsky E."/>
            <person name="Zhu S."/>
            <person name="Zimmer A."/>
            <person name="Hide W."/>
            <person name="Bult C."/>
            <person name="Grimmond S.M."/>
            <person name="Teasdale R.D."/>
            <person name="Liu E.T."/>
            <person name="Brusic V."/>
            <person name="Quackenbush J."/>
            <person name="Wahlestedt C."/>
            <person name="Mattick J.S."/>
            <person name="Hume D.A."/>
            <person name="Kai C."/>
            <person name="Sasaki D."/>
            <person name="Tomaru Y."/>
            <person name="Fukuda S."/>
            <person name="Kanamori-Katayama M."/>
            <person name="Suzuki M."/>
            <person name="Aoki J."/>
            <person name="Arakawa T."/>
            <person name="Iida J."/>
            <person name="Imamura K."/>
            <person name="Itoh M."/>
            <person name="Kato T."/>
            <person name="Kawaji H."/>
            <person name="Kawagashira N."/>
            <person name="Kawashima T."/>
            <person name="Kojima M."/>
            <person name="Kondo S."/>
            <person name="Konno H."/>
            <person name="Nakano K."/>
            <person name="Ninomiya N."/>
            <person name="Nishio T."/>
            <person name="Okada M."/>
            <person name="Plessy C."/>
            <person name="Shibata K."/>
            <person name="Shiraki T."/>
            <person name="Suzuki S."/>
            <person name="Tagami M."/>
            <person name="Waki K."/>
            <person name="Watahiki A."/>
            <person name="Okamura-Oho Y."/>
            <person name="Suzuki H."/>
            <person name="Kawai J."/>
            <person name="Hayashizaki Y."/>
        </authorList>
    </citation>
    <scope>NUCLEOTIDE SEQUENCE [LARGE SCALE MRNA] OF 91-370</scope>
    <source>
        <strain evidence="8">C57BL/6J</strain>
        <tissue evidence="8">Testis</tissue>
    </source>
</reference>
<reference evidence="7" key="3">
    <citation type="journal article" date="2003" name="Dev. Dyn.">
        <title>Identification of BOIP, a novel cDNA highly expressed during spermatogenesis that encodes a protein interacting with the orange domain of the hairy-related transcription factor HRT1/Hey1 in Xenopus and mouse.</title>
        <authorList>
            <person name="Van Wayenbergh R."/>
            <person name="Taelman V."/>
            <person name="Pichon B."/>
            <person name="Fischer A."/>
            <person name="Kricha S."/>
            <person name="Gessler M."/>
            <person name="Christophe D."/>
            <person name="Bellefroid E.J."/>
        </authorList>
    </citation>
    <scope>IDENTIFICATION</scope>
    <scope>INTERACTION WITH HEY1</scope>
    <scope>TISSUE SPECIFICITY</scope>
    <scope>DEVELOPMENTAL STAGE</scope>
</reference>
<reference key="4">
    <citation type="journal article" date="2010" name="Cell">
        <title>A tissue-specific atlas of mouse protein phosphorylation and expression.</title>
        <authorList>
            <person name="Huttlin E.L."/>
            <person name="Jedrychowski M.P."/>
            <person name="Elias J.E."/>
            <person name="Goswami T."/>
            <person name="Rad R."/>
            <person name="Beausoleil S.A."/>
            <person name="Villen J."/>
            <person name="Haas W."/>
            <person name="Sowa M.E."/>
            <person name="Gygi S.P."/>
        </authorList>
    </citation>
    <scope>PHOSPHORYLATION [LARGE SCALE ANALYSIS] AT THR-12</scope>
    <scope>IDENTIFICATION BY MASS SPECTROMETRY [LARGE SCALE ANALYSIS]</scope>
    <source>
        <tissue>Testis</tissue>
    </source>
</reference>
<proteinExistence type="evidence at protein level"/>
<comment type="subunit">
    <text evidence="5">Interacts with HEY1.</text>
</comment>
<comment type="subcellular location">
    <subcellularLocation>
        <location evidence="1">Cytoplasm</location>
    </subcellularLocation>
    <subcellularLocation>
        <location evidence="1">Nucleus</location>
    </subcellularLocation>
    <text evidence="1">Uniformly distributed within the cell, but becomes recruited to the nucleus upon binding to HEY1.</text>
</comment>
<comment type="tissue specificity">
    <text evidence="5">Expression is restricted to the adult testis, where localization is almost exclusive to round spermatids.</text>
</comment>
<comment type="developmental stage">
    <text evidence="5">Expressed in adults but not embryos.</text>
</comment>
<comment type="similarity">
    <text evidence="3">Belongs to the CCDC89 family.</text>
</comment>
<comment type="sequence caution" evidence="7">
    <conflict type="frameshift">
        <sequence resource="EMBL-CDS" id="BAB24410"/>
    </conflict>
</comment>
<comment type="sequence caution" evidence="7">
    <conflict type="miscellaneous discrepancy">
        <sequence resource="EMBL-CDS" id="BAB24410"/>
    </conflict>
    <text>Contaminating sequence. Sequence of unknown origin in the N-terminal part.</text>
</comment>
<feature type="chain" id="PRO_0000370201" description="Coiled-coil domain-containing protein 89">
    <location>
        <begin position="1"/>
        <end position="370"/>
    </location>
</feature>
<feature type="region of interest" description="Disordered" evidence="4">
    <location>
        <begin position="1"/>
        <end position="21"/>
    </location>
</feature>
<feature type="coiled-coil region" evidence="3">
    <location>
        <begin position="36"/>
        <end position="346"/>
    </location>
</feature>
<feature type="modified residue" description="Phosphothreonine" evidence="10">
    <location>
        <position position="12"/>
    </location>
</feature>
<feature type="sequence conflict" description="In Ref. 2; BAB24410." evidence="7" ref="2">
    <original>K</original>
    <variation>E</variation>
    <location>
        <position position="107"/>
    </location>
</feature>
<feature type="sequence conflict" description="In Ref. 2; BAB24410." evidence="7" ref="2">
    <original>QK</original>
    <variation>KM</variation>
    <location>
        <begin position="116"/>
        <end position="117"/>
    </location>
</feature>
<feature type="sequence conflict" description="In Ref. 2; BAB24410." evidence="7" ref="2">
    <original>EL</original>
    <variation>DV</variation>
    <location>
        <begin position="224"/>
        <end position="225"/>
    </location>
</feature>
<accession>Q9DA73</accession>
<dbReference type="EMBL" id="AC100322">
    <property type="status" value="NOT_ANNOTATED_CDS"/>
    <property type="molecule type" value="Genomic_DNA"/>
</dbReference>
<dbReference type="EMBL" id="AK006105">
    <property type="protein sequence ID" value="BAB24410.1"/>
    <property type="status" value="ALT_SEQ"/>
    <property type="molecule type" value="mRNA"/>
</dbReference>
<dbReference type="CCDS" id="CCDS52308.1"/>
<dbReference type="RefSeq" id="NP_081574.1">
    <property type="nucleotide sequence ID" value="NM_027298.1"/>
</dbReference>
<dbReference type="SMR" id="Q9DA73"/>
<dbReference type="BioGRID" id="213839">
    <property type="interactions" value="1"/>
</dbReference>
<dbReference type="FunCoup" id="Q9DA73">
    <property type="interactions" value="627"/>
</dbReference>
<dbReference type="IntAct" id="Q9DA73">
    <property type="interactions" value="1"/>
</dbReference>
<dbReference type="STRING" id="10090.ENSMUSP00000060309"/>
<dbReference type="iPTMnet" id="Q9DA73"/>
<dbReference type="PhosphoSitePlus" id="Q9DA73"/>
<dbReference type="PaxDb" id="10090-ENSMUSP00000060309"/>
<dbReference type="ProteomicsDB" id="265602"/>
<dbReference type="Antibodypedia" id="49524">
    <property type="antibodies" value="76 antibodies from 10 providers"/>
</dbReference>
<dbReference type="Ensembl" id="ENSMUST00000061391.9">
    <property type="protein sequence ID" value="ENSMUSP00000060309.8"/>
    <property type="gene ID" value="ENSMUSG00000044362.9"/>
</dbReference>
<dbReference type="GeneID" id="70054"/>
<dbReference type="KEGG" id="mmu:70054"/>
<dbReference type="UCSC" id="uc012fox.1">
    <property type="organism name" value="mouse"/>
</dbReference>
<dbReference type="AGR" id="MGI:1917304"/>
<dbReference type="CTD" id="220388"/>
<dbReference type="MGI" id="MGI:1917304">
    <property type="gene designation" value="Ccdc89"/>
</dbReference>
<dbReference type="VEuPathDB" id="HostDB:ENSMUSG00000044362"/>
<dbReference type="eggNOG" id="ENOG502QU10">
    <property type="taxonomic scope" value="Eukaryota"/>
</dbReference>
<dbReference type="GeneTree" id="ENSGT00390000016046"/>
<dbReference type="HOGENOM" id="CLU_066884_0_0_1"/>
<dbReference type="InParanoid" id="Q9DA73"/>
<dbReference type="OMA" id="AMLCSRI"/>
<dbReference type="OrthoDB" id="10020070at2759"/>
<dbReference type="PhylomeDB" id="Q9DA73"/>
<dbReference type="TreeFam" id="TF333232"/>
<dbReference type="BioGRID-ORCS" id="70054">
    <property type="hits" value="1 hit in 76 CRISPR screens"/>
</dbReference>
<dbReference type="PRO" id="PR:Q9DA73"/>
<dbReference type="Proteomes" id="UP000000589">
    <property type="component" value="Chromosome 7"/>
</dbReference>
<dbReference type="RNAct" id="Q9DA73">
    <property type="molecule type" value="protein"/>
</dbReference>
<dbReference type="Bgee" id="ENSMUSG00000044362">
    <property type="expression patterns" value="Expressed in seminiferous tubule of testis and 101 other cell types or tissues"/>
</dbReference>
<dbReference type="GO" id="GO:0005737">
    <property type="term" value="C:cytoplasm"/>
    <property type="evidence" value="ECO:0007669"/>
    <property type="project" value="UniProtKB-SubCell"/>
</dbReference>
<dbReference type="GO" id="GO:0005634">
    <property type="term" value="C:nucleus"/>
    <property type="evidence" value="ECO:0000250"/>
    <property type="project" value="MGI"/>
</dbReference>
<dbReference type="InterPro" id="IPR043450">
    <property type="entry name" value="CCDC89-like"/>
</dbReference>
<dbReference type="PANTHER" id="PTHR34768">
    <property type="entry name" value="COILED-COIL DOMAIN-CONTAINING PROTEIN 89"/>
    <property type="match status" value="1"/>
</dbReference>
<dbReference type="PANTHER" id="PTHR34768:SF1">
    <property type="entry name" value="COILED-COIL DOMAIN-CONTAINING PROTEIN 89"/>
    <property type="match status" value="1"/>
</dbReference>
<evidence type="ECO:0000250" key="1">
    <source>
        <dbReference type="UniProtKB" id="Q7ZW57"/>
    </source>
</evidence>
<evidence type="ECO:0000250" key="2">
    <source>
        <dbReference type="UniProtKB" id="Q8N998"/>
    </source>
</evidence>
<evidence type="ECO:0000255" key="3"/>
<evidence type="ECO:0000256" key="4">
    <source>
        <dbReference type="SAM" id="MobiDB-lite"/>
    </source>
</evidence>
<evidence type="ECO:0000269" key="5">
    <source>
    </source>
</evidence>
<evidence type="ECO:0000303" key="6">
    <source>
    </source>
</evidence>
<evidence type="ECO:0000305" key="7"/>
<evidence type="ECO:0000312" key="8">
    <source>
        <dbReference type="EMBL" id="BAB24410.1"/>
    </source>
</evidence>
<evidence type="ECO:0000312" key="9">
    <source>
        <dbReference type="MGI" id="MGI:1917304"/>
    </source>
</evidence>
<evidence type="ECO:0007744" key="10">
    <source>
    </source>
</evidence>
<gene>
    <name evidence="9" type="primary">Ccdc89</name>
    <name evidence="6" type="synonym">Boip</name>
</gene>
<protein>
    <recommendedName>
        <fullName evidence="2">Coiled-coil domain-containing protein 89</fullName>
    </recommendedName>
    <alternativeName>
        <fullName evidence="6">Bc8 orange-interacting protein</fullName>
    </alternativeName>
</protein>
<organism>
    <name type="scientific">Mus musculus</name>
    <name type="common">Mouse</name>
    <dbReference type="NCBI Taxonomy" id="10090"/>
    <lineage>
        <taxon>Eukaryota</taxon>
        <taxon>Metazoa</taxon>
        <taxon>Chordata</taxon>
        <taxon>Craniata</taxon>
        <taxon>Vertebrata</taxon>
        <taxon>Euteleostomi</taxon>
        <taxon>Mammalia</taxon>
        <taxon>Eutheria</taxon>
        <taxon>Euarchontoglires</taxon>
        <taxon>Glires</taxon>
        <taxon>Rodentia</taxon>
        <taxon>Myomorpha</taxon>
        <taxon>Muroidea</taxon>
        <taxon>Muridae</taxon>
        <taxon>Murinae</taxon>
        <taxon>Mus</taxon>
        <taxon>Mus</taxon>
    </lineage>
</organism>
<name>CCD89_MOUSE</name>
<keyword id="KW-0175">Coiled coil</keyword>
<keyword id="KW-0963">Cytoplasm</keyword>
<keyword id="KW-0539">Nucleus</keyword>
<keyword id="KW-0597">Phosphoprotein</keyword>
<keyword id="KW-1185">Reference proteome</keyword>